<dbReference type="EC" id="3.1.-.-" evidence="1"/>
<dbReference type="EMBL" id="BX571856">
    <property type="protein sequence ID" value="CAG39934.1"/>
    <property type="molecule type" value="Genomic_DNA"/>
</dbReference>
<dbReference type="RefSeq" id="WP_000172367.1">
    <property type="nucleotide sequence ID" value="NC_002952.2"/>
</dbReference>
<dbReference type="SMR" id="Q6GIC2"/>
<dbReference type="KEGG" id="sar:SAR0928"/>
<dbReference type="HOGENOM" id="CLU_007838_0_0_9"/>
<dbReference type="Proteomes" id="UP000000596">
    <property type="component" value="Chromosome"/>
</dbReference>
<dbReference type="GO" id="GO:0051539">
    <property type="term" value="F:4 iron, 4 sulfur cluster binding"/>
    <property type="evidence" value="ECO:0007669"/>
    <property type="project" value="UniProtKB-KW"/>
</dbReference>
<dbReference type="GO" id="GO:0008409">
    <property type="term" value="F:5'-3' exonuclease activity"/>
    <property type="evidence" value="ECO:0007669"/>
    <property type="project" value="UniProtKB-UniRule"/>
</dbReference>
<dbReference type="GO" id="GO:0005524">
    <property type="term" value="F:ATP binding"/>
    <property type="evidence" value="ECO:0007669"/>
    <property type="project" value="UniProtKB-UniRule"/>
</dbReference>
<dbReference type="GO" id="GO:0003690">
    <property type="term" value="F:double-stranded DNA binding"/>
    <property type="evidence" value="ECO:0007669"/>
    <property type="project" value="UniProtKB-UniRule"/>
</dbReference>
<dbReference type="GO" id="GO:0004386">
    <property type="term" value="F:helicase activity"/>
    <property type="evidence" value="ECO:0007669"/>
    <property type="project" value="UniProtKB-KW"/>
</dbReference>
<dbReference type="GO" id="GO:0046872">
    <property type="term" value="F:metal ion binding"/>
    <property type="evidence" value="ECO:0007669"/>
    <property type="project" value="UniProtKB-KW"/>
</dbReference>
<dbReference type="GO" id="GO:0000724">
    <property type="term" value="P:double-strand break repair via homologous recombination"/>
    <property type="evidence" value="ECO:0007669"/>
    <property type="project" value="UniProtKB-UniRule"/>
</dbReference>
<dbReference type="Gene3D" id="3.90.320.10">
    <property type="match status" value="1"/>
</dbReference>
<dbReference type="Gene3D" id="3.40.50.300">
    <property type="entry name" value="P-loop containing nucleotide triphosphate hydrolases"/>
    <property type="match status" value="3"/>
</dbReference>
<dbReference type="HAMAP" id="MF_01452">
    <property type="entry name" value="AddB_type1"/>
    <property type="match status" value="1"/>
</dbReference>
<dbReference type="InterPro" id="IPR049035">
    <property type="entry name" value="ADDB_N"/>
</dbReference>
<dbReference type="InterPro" id="IPR014140">
    <property type="entry name" value="DNA_helicase_suAddB"/>
</dbReference>
<dbReference type="InterPro" id="IPR014017">
    <property type="entry name" value="DNA_helicase_UvrD-like_C"/>
</dbReference>
<dbReference type="InterPro" id="IPR027417">
    <property type="entry name" value="P-loop_NTPase"/>
</dbReference>
<dbReference type="InterPro" id="IPR011604">
    <property type="entry name" value="PDDEXK-like_dom_sf"/>
</dbReference>
<dbReference type="InterPro" id="IPR038726">
    <property type="entry name" value="PDDEXK_AddAB-type"/>
</dbReference>
<dbReference type="NCBIfam" id="TIGR02773">
    <property type="entry name" value="addB_Gpos"/>
    <property type="match status" value="1"/>
</dbReference>
<dbReference type="PANTHER" id="PTHR30591">
    <property type="entry name" value="RECBCD ENZYME SUBUNIT RECC"/>
    <property type="match status" value="1"/>
</dbReference>
<dbReference type="PANTHER" id="PTHR30591:SF1">
    <property type="entry name" value="RECBCD ENZYME SUBUNIT RECC"/>
    <property type="match status" value="1"/>
</dbReference>
<dbReference type="Pfam" id="PF21445">
    <property type="entry name" value="ADDB_N"/>
    <property type="match status" value="1"/>
</dbReference>
<dbReference type="Pfam" id="PF12705">
    <property type="entry name" value="PDDEXK_1"/>
    <property type="match status" value="1"/>
</dbReference>
<dbReference type="SUPFAM" id="SSF52540">
    <property type="entry name" value="P-loop containing nucleoside triphosphate hydrolases"/>
    <property type="match status" value="1"/>
</dbReference>
<dbReference type="PROSITE" id="PS51198">
    <property type="entry name" value="UVRD_HELICASE_ATP_BIND"/>
    <property type="match status" value="1"/>
</dbReference>
<dbReference type="PROSITE" id="PS51217">
    <property type="entry name" value="UVRD_HELICASE_CTER"/>
    <property type="match status" value="1"/>
</dbReference>
<feature type="chain" id="PRO_0000379208" description="ATP-dependent helicase/deoxyribonuclease subunit B">
    <location>
        <begin position="1"/>
        <end position="1158"/>
    </location>
</feature>
<feature type="domain" description="UvrD-like helicase ATP-binding" evidence="1">
    <location>
        <begin position="1"/>
        <end position="275"/>
    </location>
</feature>
<feature type="domain" description="UvrD-like helicase C-terminal" evidence="1">
    <location>
        <begin position="269"/>
        <end position="583"/>
    </location>
</feature>
<feature type="binding site" evidence="1">
    <location>
        <begin position="8"/>
        <end position="15"/>
    </location>
    <ligand>
        <name>ATP</name>
        <dbReference type="ChEBI" id="CHEBI:30616"/>
    </ligand>
</feature>
<feature type="binding site" evidence="1">
    <location>
        <position position="784"/>
    </location>
    <ligand>
        <name>[4Fe-4S] cluster</name>
        <dbReference type="ChEBI" id="CHEBI:49883"/>
    </ligand>
</feature>
<feature type="binding site" evidence="1">
    <location>
        <position position="1112"/>
    </location>
    <ligand>
        <name>[4Fe-4S] cluster</name>
        <dbReference type="ChEBI" id="CHEBI:49883"/>
    </ligand>
</feature>
<feature type="binding site" evidence="1">
    <location>
        <position position="1115"/>
    </location>
    <ligand>
        <name>[4Fe-4S] cluster</name>
        <dbReference type="ChEBI" id="CHEBI:49883"/>
    </ligand>
</feature>
<feature type="binding site" evidence="1">
    <location>
        <position position="1121"/>
    </location>
    <ligand>
        <name>[4Fe-4S] cluster</name>
        <dbReference type="ChEBI" id="CHEBI:49883"/>
    </ligand>
</feature>
<gene>
    <name evidence="1" type="primary">addB</name>
    <name type="ordered locus">SAR0928</name>
</gene>
<sequence>MTLHAYLGRAGTGKSTKMLTEIKQKMKADPLGDPIILIAPTQSTFQLEQAFVNDPELNGSLRTEVLHFERLSHRIFQEVGSYSEQKLSKAATEMMIYNIVQEQQKYLKLYQSQAKYYGFSEKLTEQIQDFKKYAVTPEHLESFIADKNMQTRTKNKLEDIALIYREFEQRIQNEFITGEDALQYFIDCMPKSEWLKRADIYIDGFHNFSTIEYLIIKGLIKYAKSVTIILTTDGNHDQFSLFRKPSEVLRHIEEISNELNISIERQYFNQLYRFNNQDLKHLEQEFDALQINRVACQGHINILESATMREEINEIARRIIVDIRDKQLRYQDIAILYRDESYAYLFDSILPLYNIPYNIDTKRSMTHHPVMEMIRSLIEVIQSNWQINPMLRLLKTDVLTTSYLKSAYLVDLLENFVLERGIYGKRWLDDELFNVEHFSKMGRKAHKLTEDERNTFEQVVKLKKDVIDKILHFEKQMSQAATVKDFATAFYESMEYFELPNQLMTERDELDLNGNHEKAEEIDQIWNGLIQILDDLVLVFGDEPMSMERFLEVFDIGLEQLEFVMIPQTLDQVSIGTMDLAKVDNKQHVYLVGMNDGTMPQPVTASSLITDEEKKYFEQQANVELSPTSDILQMDEAFVCYVAMTRAKGNVTFSYSLMGSSGDDKEISPFLNQIQSLFNQLEITNIPQYHEVNPLSLMQHAKQTKITLFEALRAWLDDEIVADSWLDAYQVIRDSDHLSQGLDYLMSALTFDNETVKLGETLSKDLYGKEINASVSRFEGYQQCPFKHYASHGLKLNERTKYELQNFDLGDIFHSVLKYISERINGDFKQLDLKKIRQLTNEALEEILPKVQFNLLNSSAYYRYLSRRIGAIVETTLSALKYQGTYSKFMPKHFETSFRRKPRTNDELIAQTLTTTQGIPINIRGQIDRIDTYTKNDTSFVNIIDYKSSEGSATLDLTKVYYGMQMQMMTYMDIVLQNKQRLGLTDIVKPGGLLYFHVHEPRIKFKSWADIDEDKLEQDLIKKFKLSGLVNADQTVIDALDIRLEPKFTSDIVPVGLNKDGSLSKRGSQVADEATIYKFIQHNKENFIETASNIMDGHTEVAPLKYKQKLPCAFCSYQSVCHVDGMIDSKRYRTVDETINPIEAIQNININDEFGGEQ</sequence>
<keyword id="KW-0004">4Fe-4S</keyword>
<keyword id="KW-0067">ATP-binding</keyword>
<keyword id="KW-0227">DNA damage</keyword>
<keyword id="KW-0234">DNA repair</keyword>
<keyword id="KW-0238">DNA-binding</keyword>
<keyword id="KW-0269">Exonuclease</keyword>
<keyword id="KW-0347">Helicase</keyword>
<keyword id="KW-0378">Hydrolase</keyword>
<keyword id="KW-0408">Iron</keyword>
<keyword id="KW-0411">Iron-sulfur</keyword>
<keyword id="KW-0479">Metal-binding</keyword>
<keyword id="KW-0540">Nuclease</keyword>
<keyword id="KW-0547">Nucleotide-binding</keyword>
<evidence type="ECO:0000255" key="1">
    <source>
        <dbReference type="HAMAP-Rule" id="MF_01452"/>
    </source>
</evidence>
<protein>
    <recommendedName>
        <fullName evidence="1">ATP-dependent helicase/deoxyribonuclease subunit B</fullName>
        <ecNumber evidence="1">3.1.-.-</ecNumber>
    </recommendedName>
    <alternativeName>
        <fullName evidence="1">ATP-dependent helicase/nuclease subunit AddB</fullName>
    </alternativeName>
</protein>
<proteinExistence type="inferred from homology"/>
<name>ADDB_STAAR</name>
<comment type="function">
    <text evidence="1">The heterodimer acts as both an ATP-dependent DNA helicase and an ATP-dependent, dual-direction single-stranded exonuclease. Recognizes the chi site generating a DNA molecule suitable for the initiation of homologous recombination. The AddB subunit has 5' -&gt; 3' nuclease activity but not helicase activity.</text>
</comment>
<comment type="cofactor">
    <cofactor evidence="1">
        <name>Mg(2+)</name>
        <dbReference type="ChEBI" id="CHEBI:18420"/>
    </cofactor>
</comment>
<comment type="cofactor">
    <cofactor evidence="1">
        <name>[4Fe-4S] cluster</name>
        <dbReference type="ChEBI" id="CHEBI:49883"/>
    </cofactor>
    <text evidence="1">Binds 1 [4Fe-4S] cluster.</text>
</comment>
<comment type="subunit">
    <text evidence="1">Heterodimer of AddA and AddB.</text>
</comment>
<comment type="miscellaneous">
    <text evidence="1">Despite having conserved helicase domains, this subunit does not have helicase activity.</text>
</comment>
<comment type="similarity">
    <text evidence="1">Belongs to the helicase family. AddB/RexB type 1 subfamily.</text>
</comment>
<accession>Q6GIC2</accession>
<organism>
    <name type="scientific">Staphylococcus aureus (strain MRSA252)</name>
    <dbReference type="NCBI Taxonomy" id="282458"/>
    <lineage>
        <taxon>Bacteria</taxon>
        <taxon>Bacillati</taxon>
        <taxon>Bacillota</taxon>
        <taxon>Bacilli</taxon>
        <taxon>Bacillales</taxon>
        <taxon>Staphylococcaceae</taxon>
        <taxon>Staphylococcus</taxon>
    </lineage>
</organism>
<reference key="1">
    <citation type="journal article" date="2004" name="Proc. Natl. Acad. Sci. U.S.A.">
        <title>Complete genomes of two clinical Staphylococcus aureus strains: evidence for the rapid evolution of virulence and drug resistance.</title>
        <authorList>
            <person name="Holden M.T.G."/>
            <person name="Feil E.J."/>
            <person name="Lindsay J.A."/>
            <person name="Peacock S.J."/>
            <person name="Day N.P.J."/>
            <person name="Enright M.C."/>
            <person name="Foster T.J."/>
            <person name="Moore C.E."/>
            <person name="Hurst L."/>
            <person name="Atkin R."/>
            <person name="Barron A."/>
            <person name="Bason N."/>
            <person name="Bentley S.D."/>
            <person name="Chillingworth C."/>
            <person name="Chillingworth T."/>
            <person name="Churcher C."/>
            <person name="Clark L."/>
            <person name="Corton C."/>
            <person name="Cronin A."/>
            <person name="Doggett J."/>
            <person name="Dowd L."/>
            <person name="Feltwell T."/>
            <person name="Hance Z."/>
            <person name="Harris B."/>
            <person name="Hauser H."/>
            <person name="Holroyd S."/>
            <person name="Jagels K."/>
            <person name="James K.D."/>
            <person name="Lennard N."/>
            <person name="Line A."/>
            <person name="Mayes R."/>
            <person name="Moule S."/>
            <person name="Mungall K."/>
            <person name="Ormond D."/>
            <person name="Quail M.A."/>
            <person name="Rabbinowitsch E."/>
            <person name="Rutherford K.M."/>
            <person name="Sanders M."/>
            <person name="Sharp S."/>
            <person name="Simmonds M."/>
            <person name="Stevens K."/>
            <person name="Whitehead S."/>
            <person name="Barrell B.G."/>
            <person name="Spratt B.G."/>
            <person name="Parkhill J."/>
        </authorList>
    </citation>
    <scope>NUCLEOTIDE SEQUENCE [LARGE SCALE GENOMIC DNA]</scope>
    <source>
        <strain>MRSA252</strain>
    </source>
</reference>